<comment type="similarity">
    <text evidence="1">Belongs to the eukaryotic ribosomal protein eL39 family.</text>
</comment>
<name>RL39_METPE</name>
<sequence length="50" mass="5902">MSKLTKGRKIRLSKATAQNRRVPSWVMIKTKRAVVSHPKRRSWRRSSLKV</sequence>
<evidence type="ECO:0000255" key="1">
    <source>
        <dbReference type="HAMAP-Rule" id="MF_00629"/>
    </source>
</evidence>
<evidence type="ECO:0000305" key="2"/>
<proteinExistence type="inferred from homology"/>
<dbReference type="EMBL" id="CP001338">
    <property type="protein sequence ID" value="ACL15911.1"/>
    <property type="molecule type" value="Genomic_DNA"/>
</dbReference>
<dbReference type="RefSeq" id="WP_012617230.1">
    <property type="nucleotide sequence ID" value="NC_011832.1"/>
</dbReference>
<dbReference type="SMR" id="B8GEU4"/>
<dbReference type="STRING" id="521011.Mpal_0538"/>
<dbReference type="GeneID" id="7271954"/>
<dbReference type="KEGG" id="mpl:Mpal_0538"/>
<dbReference type="eggNOG" id="arCOG04177">
    <property type="taxonomic scope" value="Archaea"/>
</dbReference>
<dbReference type="HOGENOM" id="CLU_181948_4_0_2"/>
<dbReference type="OrthoDB" id="65887at2157"/>
<dbReference type="Proteomes" id="UP000002457">
    <property type="component" value="Chromosome"/>
</dbReference>
<dbReference type="GO" id="GO:1990904">
    <property type="term" value="C:ribonucleoprotein complex"/>
    <property type="evidence" value="ECO:0007669"/>
    <property type="project" value="UniProtKB-KW"/>
</dbReference>
<dbReference type="GO" id="GO:0005840">
    <property type="term" value="C:ribosome"/>
    <property type="evidence" value="ECO:0007669"/>
    <property type="project" value="UniProtKB-KW"/>
</dbReference>
<dbReference type="GO" id="GO:0003735">
    <property type="term" value="F:structural constituent of ribosome"/>
    <property type="evidence" value="ECO:0007669"/>
    <property type="project" value="InterPro"/>
</dbReference>
<dbReference type="GO" id="GO:0006412">
    <property type="term" value="P:translation"/>
    <property type="evidence" value="ECO:0007669"/>
    <property type="project" value="UniProtKB-UniRule"/>
</dbReference>
<dbReference type="Gene3D" id="1.10.1620.10">
    <property type="entry name" value="Ribosomal protein L39e"/>
    <property type="match status" value="1"/>
</dbReference>
<dbReference type="HAMAP" id="MF_00629">
    <property type="entry name" value="Ribosomal_eL39"/>
    <property type="match status" value="1"/>
</dbReference>
<dbReference type="InterPro" id="IPR000077">
    <property type="entry name" value="Ribosomal_eL39"/>
</dbReference>
<dbReference type="InterPro" id="IPR023626">
    <property type="entry name" value="Ribosomal_eL39_dom_sf"/>
</dbReference>
<dbReference type="NCBIfam" id="NF002316">
    <property type="entry name" value="PRK01242.1"/>
    <property type="match status" value="1"/>
</dbReference>
<dbReference type="Pfam" id="PF00832">
    <property type="entry name" value="Ribosomal_L39"/>
    <property type="match status" value="1"/>
</dbReference>
<dbReference type="SUPFAM" id="SSF48662">
    <property type="entry name" value="Ribosomal protein L39e"/>
    <property type="match status" value="1"/>
</dbReference>
<keyword id="KW-1185">Reference proteome</keyword>
<keyword id="KW-0687">Ribonucleoprotein</keyword>
<keyword id="KW-0689">Ribosomal protein</keyword>
<reference key="1">
    <citation type="journal article" date="2015" name="Genome Announc.">
        <title>Complete Genome Sequence of Methanosphaerula palustris E1-9CT, a Hydrogenotrophic Methanogen Isolated from a Minerotrophic Fen Peatland.</title>
        <authorList>
            <person name="Cadillo-Quiroz H."/>
            <person name="Browne P."/>
            <person name="Kyrpides N."/>
            <person name="Woyke T."/>
            <person name="Goodwin L."/>
            <person name="Detter C."/>
            <person name="Yavitt J.B."/>
            <person name="Zinder S.H."/>
        </authorList>
    </citation>
    <scope>NUCLEOTIDE SEQUENCE [LARGE SCALE GENOMIC DNA]</scope>
    <source>
        <strain>ATCC BAA-1556 / DSM 19958 / E1-9c</strain>
    </source>
</reference>
<feature type="chain" id="PRO_1000147270" description="Large ribosomal subunit protein eL39">
    <location>
        <begin position="1"/>
        <end position="50"/>
    </location>
</feature>
<gene>
    <name evidence="1" type="primary">rpl39e</name>
    <name type="ordered locus">Mpal_0538</name>
</gene>
<protein>
    <recommendedName>
        <fullName evidence="1">Large ribosomal subunit protein eL39</fullName>
    </recommendedName>
    <alternativeName>
        <fullName evidence="2">50S ribosomal protein L39e</fullName>
    </alternativeName>
</protein>
<accession>B8GEU4</accession>
<organism>
    <name type="scientific">Methanosphaerula palustris (strain ATCC BAA-1556 / DSM 19958 / E1-9c)</name>
    <dbReference type="NCBI Taxonomy" id="521011"/>
    <lineage>
        <taxon>Archaea</taxon>
        <taxon>Methanobacteriati</taxon>
        <taxon>Methanobacteriota</taxon>
        <taxon>Stenosarchaea group</taxon>
        <taxon>Methanomicrobia</taxon>
        <taxon>Methanomicrobiales</taxon>
        <taxon>Methanoregulaceae</taxon>
        <taxon>Methanosphaerula</taxon>
    </lineage>
</organism>